<protein>
    <recommendedName>
        <fullName evidence="1">Small ribosomal subunit protein uS17</fullName>
    </recommendedName>
    <alternativeName>
        <fullName evidence="2">30S ribosomal protein S17</fullName>
    </alternativeName>
</protein>
<feature type="chain" id="PRO_1000054914" description="Small ribosomal subunit protein uS17">
    <location>
        <begin position="1"/>
        <end position="89"/>
    </location>
</feature>
<organism>
    <name type="scientific">Azoarcus sp. (strain BH72)</name>
    <dbReference type="NCBI Taxonomy" id="418699"/>
    <lineage>
        <taxon>Bacteria</taxon>
        <taxon>Pseudomonadati</taxon>
        <taxon>Pseudomonadota</taxon>
        <taxon>Betaproteobacteria</taxon>
        <taxon>Rhodocyclales</taxon>
        <taxon>Zoogloeaceae</taxon>
        <taxon>Azoarcus</taxon>
    </lineage>
</organism>
<dbReference type="EMBL" id="AM406670">
    <property type="protein sequence ID" value="CAL96024.1"/>
    <property type="molecule type" value="Genomic_DNA"/>
</dbReference>
<dbReference type="RefSeq" id="WP_011767131.1">
    <property type="nucleotide sequence ID" value="NC_008702.1"/>
</dbReference>
<dbReference type="SMR" id="A1KB18"/>
<dbReference type="STRING" id="62928.azo3408"/>
<dbReference type="KEGG" id="aoa:dqs_3547"/>
<dbReference type="KEGG" id="azo:azo3408"/>
<dbReference type="eggNOG" id="COG0186">
    <property type="taxonomic scope" value="Bacteria"/>
</dbReference>
<dbReference type="HOGENOM" id="CLU_073626_1_1_4"/>
<dbReference type="OrthoDB" id="9811714at2"/>
<dbReference type="Proteomes" id="UP000002588">
    <property type="component" value="Chromosome"/>
</dbReference>
<dbReference type="GO" id="GO:0022627">
    <property type="term" value="C:cytosolic small ribosomal subunit"/>
    <property type="evidence" value="ECO:0007669"/>
    <property type="project" value="TreeGrafter"/>
</dbReference>
<dbReference type="GO" id="GO:0019843">
    <property type="term" value="F:rRNA binding"/>
    <property type="evidence" value="ECO:0007669"/>
    <property type="project" value="UniProtKB-UniRule"/>
</dbReference>
<dbReference type="GO" id="GO:0003735">
    <property type="term" value="F:structural constituent of ribosome"/>
    <property type="evidence" value="ECO:0007669"/>
    <property type="project" value="InterPro"/>
</dbReference>
<dbReference type="GO" id="GO:0006412">
    <property type="term" value="P:translation"/>
    <property type="evidence" value="ECO:0007669"/>
    <property type="project" value="UniProtKB-UniRule"/>
</dbReference>
<dbReference type="CDD" id="cd00364">
    <property type="entry name" value="Ribosomal_uS17"/>
    <property type="match status" value="1"/>
</dbReference>
<dbReference type="Gene3D" id="2.40.50.140">
    <property type="entry name" value="Nucleic acid-binding proteins"/>
    <property type="match status" value="1"/>
</dbReference>
<dbReference type="HAMAP" id="MF_01345_B">
    <property type="entry name" value="Ribosomal_uS17_B"/>
    <property type="match status" value="1"/>
</dbReference>
<dbReference type="InterPro" id="IPR012340">
    <property type="entry name" value="NA-bd_OB-fold"/>
</dbReference>
<dbReference type="InterPro" id="IPR000266">
    <property type="entry name" value="Ribosomal_uS17"/>
</dbReference>
<dbReference type="InterPro" id="IPR019984">
    <property type="entry name" value="Ribosomal_uS17_bact/chlr"/>
</dbReference>
<dbReference type="InterPro" id="IPR019979">
    <property type="entry name" value="Ribosomal_uS17_CS"/>
</dbReference>
<dbReference type="NCBIfam" id="NF004123">
    <property type="entry name" value="PRK05610.1"/>
    <property type="match status" value="1"/>
</dbReference>
<dbReference type="NCBIfam" id="TIGR03635">
    <property type="entry name" value="uS17_bact"/>
    <property type="match status" value="1"/>
</dbReference>
<dbReference type="PANTHER" id="PTHR10744">
    <property type="entry name" value="40S RIBOSOMAL PROTEIN S11 FAMILY MEMBER"/>
    <property type="match status" value="1"/>
</dbReference>
<dbReference type="PANTHER" id="PTHR10744:SF1">
    <property type="entry name" value="SMALL RIBOSOMAL SUBUNIT PROTEIN US17M"/>
    <property type="match status" value="1"/>
</dbReference>
<dbReference type="Pfam" id="PF00366">
    <property type="entry name" value="Ribosomal_S17"/>
    <property type="match status" value="1"/>
</dbReference>
<dbReference type="PRINTS" id="PR00973">
    <property type="entry name" value="RIBOSOMALS17"/>
</dbReference>
<dbReference type="SUPFAM" id="SSF50249">
    <property type="entry name" value="Nucleic acid-binding proteins"/>
    <property type="match status" value="1"/>
</dbReference>
<dbReference type="PROSITE" id="PS00056">
    <property type="entry name" value="RIBOSOMAL_S17"/>
    <property type="match status" value="1"/>
</dbReference>
<accession>A1KB18</accession>
<gene>
    <name evidence="1" type="primary">rpsQ</name>
    <name type="ordered locus">azo3408</name>
</gene>
<proteinExistence type="inferred from homology"/>
<evidence type="ECO:0000255" key="1">
    <source>
        <dbReference type="HAMAP-Rule" id="MF_01345"/>
    </source>
</evidence>
<evidence type="ECO:0000305" key="2"/>
<reference key="1">
    <citation type="journal article" date="2006" name="Nat. Biotechnol.">
        <title>Complete genome of the mutualistic, N2-fixing grass endophyte Azoarcus sp. strain BH72.</title>
        <authorList>
            <person name="Krause A."/>
            <person name="Ramakumar A."/>
            <person name="Bartels D."/>
            <person name="Battistoni F."/>
            <person name="Bekel T."/>
            <person name="Boch J."/>
            <person name="Boehm M."/>
            <person name="Friedrich F."/>
            <person name="Hurek T."/>
            <person name="Krause L."/>
            <person name="Linke B."/>
            <person name="McHardy A.C."/>
            <person name="Sarkar A."/>
            <person name="Schneiker S."/>
            <person name="Syed A.A."/>
            <person name="Thauer R."/>
            <person name="Vorhoelter F.-J."/>
            <person name="Weidner S."/>
            <person name="Puehler A."/>
            <person name="Reinhold-Hurek B."/>
            <person name="Kaiser O."/>
            <person name="Goesmann A."/>
        </authorList>
    </citation>
    <scope>NUCLEOTIDE SEQUENCE [LARGE SCALE GENOMIC DNA]</scope>
    <source>
        <strain>BH72</strain>
    </source>
</reference>
<keyword id="KW-1185">Reference proteome</keyword>
<keyword id="KW-0687">Ribonucleoprotein</keyword>
<keyword id="KW-0689">Ribosomal protein</keyword>
<keyword id="KW-0694">RNA-binding</keyword>
<keyword id="KW-0699">rRNA-binding</keyword>
<name>RS17_AZOSB</name>
<sequence length="89" mass="10181">MSEQVEKVRRALIGRVVSDKMQKTVTVLVERRVKHPLYGKIITRSAKYHAHVEDGGAGEGDLVEIEECRPISRTKTWRVTRVVEKARVI</sequence>
<comment type="function">
    <text evidence="1">One of the primary rRNA binding proteins, it binds specifically to the 5'-end of 16S ribosomal RNA.</text>
</comment>
<comment type="subunit">
    <text evidence="1">Part of the 30S ribosomal subunit.</text>
</comment>
<comment type="similarity">
    <text evidence="1">Belongs to the universal ribosomal protein uS17 family.</text>
</comment>